<keyword id="KW-0963">Cytoplasm</keyword>
<keyword id="KW-0275">Fatty acid biosynthesis</keyword>
<keyword id="KW-0276">Fatty acid metabolism</keyword>
<keyword id="KW-0444">Lipid biosynthesis</keyword>
<keyword id="KW-0443">Lipid metabolism</keyword>
<keyword id="KW-0460">Magnesium</keyword>
<keyword id="KW-0479">Metal-binding</keyword>
<keyword id="KW-0808">Transferase</keyword>
<accession>A6M302</accession>
<organism>
    <name type="scientific">Clostridium beijerinckii (strain ATCC 51743 / NCIMB 8052)</name>
    <name type="common">Clostridium acetobutylicum</name>
    <dbReference type="NCBI Taxonomy" id="290402"/>
    <lineage>
        <taxon>Bacteria</taxon>
        <taxon>Bacillati</taxon>
        <taxon>Bacillota</taxon>
        <taxon>Clostridia</taxon>
        <taxon>Eubacteriales</taxon>
        <taxon>Clostridiaceae</taxon>
        <taxon>Clostridium</taxon>
    </lineage>
</organism>
<dbReference type="EC" id="2.7.8.7" evidence="1"/>
<dbReference type="EMBL" id="CP000721">
    <property type="protein sequence ID" value="ABR36982.1"/>
    <property type="molecule type" value="Genomic_DNA"/>
</dbReference>
<dbReference type="RefSeq" id="WP_012061026.1">
    <property type="nucleotide sequence ID" value="NC_009617.1"/>
</dbReference>
<dbReference type="SMR" id="A6M302"/>
<dbReference type="GeneID" id="66347744"/>
<dbReference type="KEGG" id="cbe:Cbei_4876"/>
<dbReference type="eggNOG" id="COG0736">
    <property type="taxonomic scope" value="Bacteria"/>
</dbReference>
<dbReference type="HOGENOM" id="CLU_089696_0_2_9"/>
<dbReference type="Proteomes" id="UP000000565">
    <property type="component" value="Chromosome"/>
</dbReference>
<dbReference type="GO" id="GO:0005737">
    <property type="term" value="C:cytoplasm"/>
    <property type="evidence" value="ECO:0007669"/>
    <property type="project" value="UniProtKB-SubCell"/>
</dbReference>
<dbReference type="GO" id="GO:0008897">
    <property type="term" value="F:holo-[acyl-carrier-protein] synthase activity"/>
    <property type="evidence" value="ECO:0007669"/>
    <property type="project" value="UniProtKB-UniRule"/>
</dbReference>
<dbReference type="GO" id="GO:0000287">
    <property type="term" value="F:magnesium ion binding"/>
    <property type="evidence" value="ECO:0007669"/>
    <property type="project" value="UniProtKB-UniRule"/>
</dbReference>
<dbReference type="GO" id="GO:0006633">
    <property type="term" value="P:fatty acid biosynthetic process"/>
    <property type="evidence" value="ECO:0007669"/>
    <property type="project" value="UniProtKB-UniRule"/>
</dbReference>
<dbReference type="Gene3D" id="3.90.470.20">
    <property type="entry name" value="4'-phosphopantetheinyl transferase domain"/>
    <property type="match status" value="1"/>
</dbReference>
<dbReference type="HAMAP" id="MF_00101">
    <property type="entry name" value="AcpS"/>
    <property type="match status" value="1"/>
</dbReference>
<dbReference type="InterPro" id="IPR008278">
    <property type="entry name" value="4-PPantetheinyl_Trfase_dom"/>
</dbReference>
<dbReference type="InterPro" id="IPR037143">
    <property type="entry name" value="4-PPantetheinyl_Trfase_dom_sf"/>
</dbReference>
<dbReference type="InterPro" id="IPR002582">
    <property type="entry name" value="ACPS"/>
</dbReference>
<dbReference type="InterPro" id="IPR004568">
    <property type="entry name" value="Ppantetheine-prot_Trfase_dom"/>
</dbReference>
<dbReference type="NCBIfam" id="TIGR00516">
    <property type="entry name" value="acpS"/>
    <property type="match status" value="1"/>
</dbReference>
<dbReference type="NCBIfam" id="TIGR00556">
    <property type="entry name" value="pantethn_trn"/>
    <property type="match status" value="1"/>
</dbReference>
<dbReference type="Pfam" id="PF01648">
    <property type="entry name" value="ACPS"/>
    <property type="match status" value="1"/>
</dbReference>
<dbReference type="SUPFAM" id="SSF56214">
    <property type="entry name" value="4'-phosphopantetheinyl transferase"/>
    <property type="match status" value="1"/>
</dbReference>
<name>ACPS_CLOB8</name>
<protein>
    <recommendedName>
        <fullName evidence="1">Holo-[acyl-carrier-protein] synthase</fullName>
        <shortName evidence="1">Holo-ACP synthase</shortName>
        <ecNumber evidence="1">2.7.8.7</ecNumber>
    </recommendedName>
    <alternativeName>
        <fullName evidence="1">4'-phosphopantetheinyl transferase AcpS</fullName>
    </alternativeName>
</protein>
<gene>
    <name evidence="1" type="primary">acpS</name>
    <name type="ordered locus">Cbei_4876</name>
</gene>
<comment type="function">
    <text evidence="1">Transfers the 4'-phosphopantetheine moiety from coenzyme A to a Ser of acyl-carrier-protein.</text>
</comment>
<comment type="catalytic activity">
    <reaction evidence="1">
        <text>apo-[ACP] + CoA = holo-[ACP] + adenosine 3',5'-bisphosphate + H(+)</text>
        <dbReference type="Rhea" id="RHEA:12068"/>
        <dbReference type="Rhea" id="RHEA-COMP:9685"/>
        <dbReference type="Rhea" id="RHEA-COMP:9690"/>
        <dbReference type="ChEBI" id="CHEBI:15378"/>
        <dbReference type="ChEBI" id="CHEBI:29999"/>
        <dbReference type="ChEBI" id="CHEBI:57287"/>
        <dbReference type="ChEBI" id="CHEBI:58343"/>
        <dbReference type="ChEBI" id="CHEBI:64479"/>
        <dbReference type="EC" id="2.7.8.7"/>
    </reaction>
</comment>
<comment type="cofactor">
    <cofactor evidence="1">
        <name>Mg(2+)</name>
        <dbReference type="ChEBI" id="CHEBI:18420"/>
    </cofactor>
</comment>
<comment type="subcellular location">
    <subcellularLocation>
        <location evidence="1">Cytoplasm</location>
    </subcellularLocation>
</comment>
<comment type="similarity">
    <text evidence="1">Belongs to the P-Pant transferase superfamily. AcpS family.</text>
</comment>
<feature type="chain" id="PRO_1000075635" description="Holo-[acyl-carrier-protein] synthase">
    <location>
        <begin position="1"/>
        <end position="123"/>
    </location>
</feature>
<feature type="binding site" evidence="1">
    <location>
        <position position="8"/>
    </location>
    <ligand>
        <name>Mg(2+)</name>
        <dbReference type="ChEBI" id="CHEBI:18420"/>
    </ligand>
</feature>
<feature type="binding site" evidence="1">
    <location>
        <position position="56"/>
    </location>
    <ligand>
        <name>Mg(2+)</name>
        <dbReference type="ChEBI" id="CHEBI:18420"/>
    </ligand>
</feature>
<proteinExistence type="inferred from homology"/>
<reference key="1">
    <citation type="submission" date="2007-06" db="EMBL/GenBank/DDBJ databases">
        <title>Complete sequence of Clostridium beijerinckii NCIMB 8052.</title>
        <authorList>
            <consortium name="US DOE Joint Genome Institute"/>
            <person name="Copeland A."/>
            <person name="Lucas S."/>
            <person name="Lapidus A."/>
            <person name="Barry K."/>
            <person name="Detter J.C."/>
            <person name="Glavina del Rio T."/>
            <person name="Hammon N."/>
            <person name="Israni S."/>
            <person name="Dalin E."/>
            <person name="Tice H."/>
            <person name="Pitluck S."/>
            <person name="Sims D."/>
            <person name="Brettin T."/>
            <person name="Bruce D."/>
            <person name="Tapia R."/>
            <person name="Brainard J."/>
            <person name="Schmutz J."/>
            <person name="Larimer F."/>
            <person name="Land M."/>
            <person name="Hauser L."/>
            <person name="Kyrpides N."/>
            <person name="Mikhailova N."/>
            <person name="Bennet G."/>
            <person name="Cann I."/>
            <person name="Chen J.-S."/>
            <person name="Contreras A.L."/>
            <person name="Jones D."/>
            <person name="Kashket E."/>
            <person name="Mitchell W."/>
            <person name="Stoddard S."/>
            <person name="Schwarz W."/>
            <person name="Qureshi N."/>
            <person name="Young M."/>
            <person name="Shi Z."/>
            <person name="Ezeji T."/>
            <person name="White B."/>
            <person name="Blaschek H."/>
            <person name="Richardson P."/>
        </authorList>
    </citation>
    <scope>NUCLEOTIDE SEQUENCE [LARGE SCALE GENOMIC DNA]</scope>
    <source>
        <strain>ATCC 51743 / NCIMB 8052</strain>
    </source>
</reference>
<evidence type="ECO:0000255" key="1">
    <source>
        <dbReference type="HAMAP-Rule" id="MF_00101"/>
    </source>
</evidence>
<sequence length="123" mass="13697">MIIGIGTDIIEISRIERAIQRTNTFIERSFTCNEIAYFKLKGFKGNVVAGNFAAKEAISKAIGTGFRGFGLKDIEILRNELGKPIVNLSDKIYNLLEIKEFNMHVSISHSNENAIAYAVMEAI</sequence>